<evidence type="ECO:0000255" key="1">
    <source>
        <dbReference type="HAMAP-Rule" id="MF_01503"/>
    </source>
</evidence>
<proteinExistence type="inferred from homology"/>
<gene>
    <name type="ordered locus">GWCH70_1057</name>
</gene>
<dbReference type="EMBL" id="CP001638">
    <property type="protein sequence ID" value="ACS23917.1"/>
    <property type="molecule type" value="Genomic_DNA"/>
</dbReference>
<dbReference type="SMR" id="C5D8R0"/>
<dbReference type="STRING" id="471223.GWCH70_1057"/>
<dbReference type="KEGG" id="gwc:GWCH70_1057"/>
<dbReference type="eggNOG" id="COG2052">
    <property type="taxonomic scope" value="Bacteria"/>
</dbReference>
<dbReference type="HOGENOM" id="CLU_165326_0_0_9"/>
<dbReference type="OrthoDB" id="5432174at2"/>
<dbReference type="HAMAP" id="MF_01503">
    <property type="entry name" value="RemA"/>
    <property type="match status" value="1"/>
</dbReference>
<dbReference type="InterPro" id="IPR007169">
    <property type="entry name" value="RemA-like"/>
</dbReference>
<dbReference type="NCBIfam" id="NF046064">
    <property type="entry name" value="MtxBflmRegRemA"/>
    <property type="match status" value="1"/>
</dbReference>
<dbReference type="NCBIfam" id="NF003315">
    <property type="entry name" value="PRK04323.1"/>
    <property type="match status" value="1"/>
</dbReference>
<dbReference type="PANTHER" id="PTHR38449:SF1">
    <property type="entry name" value="REGULATORY PROTEIN SSL2874-RELATED"/>
    <property type="match status" value="1"/>
</dbReference>
<dbReference type="PANTHER" id="PTHR38449">
    <property type="entry name" value="REGULATORY PROTEIN TM_1690-RELATED"/>
    <property type="match status" value="1"/>
</dbReference>
<dbReference type="Pfam" id="PF04025">
    <property type="entry name" value="RemA-like"/>
    <property type="match status" value="1"/>
</dbReference>
<protein>
    <recommendedName>
        <fullName evidence="1">Putative regulatory protein GWCH70_1057</fullName>
    </recommendedName>
</protein>
<organism>
    <name type="scientific">Geobacillus sp. (strain WCH70)</name>
    <dbReference type="NCBI Taxonomy" id="471223"/>
    <lineage>
        <taxon>Bacteria</taxon>
        <taxon>Bacillati</taxon>
        <taxon>Bacillota</taxon>
        <taxon>Bacilli</taxon>
        <taxon>Bacillales</taxon>
        <taxon>Anoxybacillaceae</taxon>
        <taxon>Geobacillus</taxon>
    </lineage>
</organism>
<sequence length="87" mass="9439">MGIKFINIGYGNMVSAARIITIVSPDSAPIKRIIQDARESGKLVDATHGRRTRAVIIMDSDHVILSSVQPETVANRLYGSDDLSEEG</sequence>
<feature type="chain" id="PRO_1000215328" description="Putative regulatory protein GWCH70_1057">
    <location>
        <begin position="1"/>
        <end position="87"/>
    </location>
</feature>
<comment type="similarity">
    <text evidence="1">Belongs to the RemA family.</text>
</comment>
<reference key="1">
    <citation type="submission" date="2009-06" db="EMBL/GenBank/DDBJ databases">
        <title>Complete sequence of chromosome of Geopacillus sp. WCH70.</title>
        <authorList>
            <consortium name="US DOE Joint Genome Institute"/>
            <person name="Lucas S."/>
            <person name="Copeland A."/>
            <person name="Lapidus A."/>
            <person name="Glavina del Rio T."/>
            <person name="Dalin E."/>
            <person name="Tice H."/>
            <person name="Bruce D."/>
            <person name="Goodwin L."/>
            <person name="Pitluck S."/>
            <person name="Chertkov O."/>
            <person name="Brettin T."/>
            <person name="Detter J.C."/>
            <person name="Han C."/>
            <person name="Larimer F."/>
            <person name="Land M."/>
            <person name="Hauser L."/>
            <person name="Kyrpides N."/>
            <person name="Mikhailova N."/>
            <person name="Brumm P."/>
            <person name="Mead D.A."/>
            <person name="Richardson P."/>
        </authorList>
    </citation>
    <scope>NUCLEOTIDE SEQUENCE [LARGE SCALE GENOMIC DNA]</scope>
    <source>
        <strain>WCH70</strain>
    </source>
</reference>
<accession>C5D8R0</accession>
<name>Y1057_GEOSW</name>